<dbReference type="EC" id="2.1.3.2" evidence="1"/>
<dbReference type="EMBL" id="AM406670">
    <property type="protein sequence ID" value="CAL96078.1"/>
    <property type="molecule type" value="Genomic_DNA"/>
</dbReference>
<dbReference type="RefSeq" id="WP_011767184.1">
    <property type="nucleotide sequence ID" value="NC_008702.1"/>
</dbReference>
<dbReference type="SMR" id="A1KB72"/>
<dbReference type="STRING" id="62928.azo3462"/>
<dbReference type="KEGG" id="aoa:dqs_3605"/>
<dbReference type="KEGG" id="azo:azo3462"/>
<dbReference type="eggNOG" id="COG0540">
    <property type="taxonomic scope" value="Bacteria"/>
</dbReference>
<dbReference type="HOGENOM" id="CLU_043846_2_0_4"/>
<dbReference type="OrthoDB" id="9774690at2"/>
<dbReference type="UniPathway" id="UPA00070">
    <property type="reaction ID" value="UER00116"/>
</dbReference>
<dbReference type="Proteomes" id="UP000002588">
    <property type="component" value="Chromosome"/>
</dbReference>
<dbReference type="GO" id="GO:0005829">
    <property type="term" value="C:cytosol"/>
    <property type="evidence" value="ECO:0007669"/>
    <property type="project" value="TreeGrafter"/>
</dbReference>
<dbReference type="GO" id="GO:0016597">
    <property type="term" value="F:amino acid binding"/>
    <property type="evidence" value="ECO:0007669"/>
    <property type="project" value="InterPro"/>
</dbReference>
<dbReference type="GO" id="GO:0004070">
    <property type="term" value="F:aspartate carbamoyltransferase activity"/>
    <property type="evidence" value="ECO:0007669"/>
    <property type="project" value="UniProtKB-UniRule"/>
</dbReference>
<dbReference type="GO" id="GO:0006207">
    <property type="term" value="P:'de novo' pyrimidine nucleobase biosynthetic process"/>
    <property type="evidence" value="ECO:0007669"/>
    <property type="project" value="InterPro"/>
</dbReference>
<dbReference type="GO" id="GO:0044205">
    <property type="term" value="P:'de novo' UMP biosynthetic process"/>
    <property type="evidence" value="ECO:0007669"/>
    <property type="project" value="UniProtKB-UniRule"/>
</dbReference>
<dbReference type="GO" id="GO:0006520">
    <property type="term" value="P:amino acid metabolic process"/>
    <property type="evidence" value="ECO:0007669"/>
    <property type="project" value="InterPro"/>
</dbReference>
<dbReference type="FunFam" id="3.40.50.1370:FF:000007">
    <property type="entry name" value="Aspartate carbamoyltransferase"/>
    <property type="match status" value="1"/>
</dbReference>
<dbReference type="Gene3D" id="3.40.50.1370">
    <property type="entry name" value="Aspartate/ornithine carbamoyltransferase"/>
    <property type="match status" value="2"/>
</dbReference>
<dbReference type="HAMAP" id="MF_00001">
    <property type="entry name" value="Asp_carb_tr"/>
    <property type="match status" value="1"/>
</dbReference>
<dbReference type="InterPro" id="IPR006132">
    <property type="entry name" value="Asp/Orn_carbamoyltranf_P-bd"/>
</dbReference>
<dbReference type="InterPro" id="IPR006130">
    <property type="entry name" value="Asp/Orn_carbamoylTrfase"/>
</dbReference>
<dbReference type="InterPro" id="IPR036901">
    <property type="entry name" value="Asp/Orn_carbamoylTrfase_sf"/>
</dbReference>
<dbReference type="InterPro" id="IPR002082">
    <property type="entry name" value="Asp_carbamoyltransf"/>
</dbReference>
<dbReference type="InterPro" id="IPR006131">
    <property type="entry name" value="Asp_carbamoyltransf_Asp/Orn-bd"/>
</dbReference>
<dbReference type="NCBIfam" id="TIGR00670">
    <property type="entry name" value="asp_carb_tr"/>
    <property type="match status" value="1"/>
</dbReference>
<dbReference type="NCBIfam" id="NF002032">
    <property type="entry name" value="PRK00856.1"/>
    <property type="match status" value="1"/>
</dbReference>
<dbReference type="PANTHER" id="PTHR45753:SF6">
    <property type="entry name" value="ASPARTATE CARBAMOYLTRANSFERASE"/>
    <property type="match status" value="1"/>
</dbReference>
<dbReference type="PANTHER" id="PTHR45753">
    <property type="entry name" value="ORNITHINE CARBAMOYLTRANSFERASE, MITOCHONDRIAL"/>
    <property type="match status" value="1"/>
</dbReference>
<dbReference type="Pfam" id="PF00185">
    <property type="entry name" value="OTCace"/>
    <property type="match status" value="1"/>
</dbReference>
<dbReference type="Pfam" id="PF02729">
    <property type="entry name" value="OTCace_N"/>
    <property type="match status" value="1"/>
</dbReference>
<dbReference type="PRINTS" id="PR00100">
    <property type="entry name" value="AOTCASE"/>
</dbReference>
<dbReference type="PRINTS" id="PR00101">
    <property type="entry name" value="ATCASE"/>
</dbReference>
<dbReference type="SUPFAM" id="SSF53671">
    <property type="entry name" value="Aspartate/ornithine carbamoyltransferase"/>
    <property type="match status" value="1"/>
</dbReference>
<dbReference type="PROSITE" id="PS00097">
    <property type="entry name" value="CARBAMOYLTRANSFERASE"/>
    <property type="match status" value="1"/>
</dbReference>
<keyword id="KW-0665">Pyrimidine biosynthesis</keyword>
<keyword id="KW-1185">Reference proteome</keyword>
<keyword id="KW-0808">Transferase</keyword>
<proteinExistence type="inferred from homology"/>
<name>PYRB_AZOSB</name>
<sequence>MRNPQLNEHGELQHLLTLDGLPRQIITAILDTAAPFTEVAEREVKKLPLLRGKSVFNLFFENSTRTRTTFEIAAKRLSADVVNLNIATSSSNKGESLLDTVDNLSAMQADMFVVRHAASGAPFLIAQHLLATGRDHIRVVNAGDGRHAHPTQGLLDMYTIRHYKGDFTNLVVAIVGDVLHSRVARSQIAALTTLGVPEVRVIGPKTLLPTEVERMGVRVFHDMREGLKDVDVVMMLRLQNERMNGALLPTPQEYYKIWGLTAEKLALAKPDAIVMHPGPMNRGVEIDSAVADGTQAVILPQVTFGIAVRMAVMSMLGSH</sequence>
<protein>
    <recommendedName>
        <fullName evidence="1">Aspartate carbamoyltransferase catalytic subunit</fullName>
        <ecNumber evidence="1">2.1.3.2</ecNumber>
    </recommendedName>
    <alternativeName>
        <fullName evidence="1">Aspartate transcarbamylase</fullName>
        <shortName evidence="1">ATCase</shortName>
    </alternativeName>
</protein>
<reference key="1">
    <citation type="journal article" date="2006" name="Nat. Biotechnol.">
        <title>Complete genome of the mutualistic, N2-fixing grass endophyte Azoarcus sp. strain BH72.</title>
        <authorList>
            <person name="Krause A."/>
            <person name="Ramakumar A."/>
            <person name="Bartels D."/>
            <person name="Battistoni F."/>
            <person name="Bekel T."/>
            <person name="Boch J."/>
            <person name="Boehm M."/>
            <person name="Friedrich F."/>
            <person name="Hurek T."/>
            <person name="Krause L."/>
            <person name="Linke B."/>
            <person name="McHardy A.C."/>
            <person name="Sarkar A."/>
            <person name="Schneiker S."/>
            <person name="Syed A.A."/>
            <person name="Thauer R."/>
            <person name="Vorhoelter F.-J."/>
            <person name="Weidner S."/>
            <person name="Puehler A."/>
            <person name="Reinhold-Hurek B."/>
            <person name="Kaiser O."/>
            <person name="Goesmann A."/>
        </authorList>
    </citation>
    <scope>NUCLEOTIDE SEQUENCE [LARGE SCALE GENOMIC DNA]</scope>
    <source>
        <strain>BH72</strain>
    </source>
</reference>
<gene>
    <name evidence="1" type="primary">pyrB</name>
    <name type="ordered locus">azo3462</name>
</gene>
<comment type="function">
    <text evidence="1">Catalyzes the condensation of carbamoyl phosphate and aspartate to form carbamoyl aspartate and inorganic phosphate, the committed step in the de novo pyrimidine nucleotide biosynthesis pathway.</text>
</comment>
<comment type="catalytic activity">
    <reaction evidence="1">
        <text>carbamoyl phosphate + L-aspartate = N-carbamoyl-L-aspartate + phosphate + H(+)</text>
        <dbReference type="Rhea" id="RHEA:20013"/>
        <dbReference type="ChEBI" id="CHEBI:15378"/>
        <dbReference type="ChEBI" id="CHEBI:29991"/>
        <dbReference type="ChEBI" id="CHEBI:32814"/>
        <dbReference type="ChEBI" id="CHEBI:43474"/>
        <dbReference type="ChEBI" id="CHEBI:58228"/>
        <dbReference type="EC" id="2.1.3.2"/>
    </reaction>
</comment>
<comment type="pathway">
    <text evidence="1">Pyrimidine metabolism; UMP biosynthesis via de novo pathway; (S)-dihydroorotate from bicarbonate: step 2/3.</text>
</comment>
<comment type="subunit">
    <text evidence="1">Heterododecamer (2C3:3R2) of six catalytic PyrB chains organized as two trimers (C3), and six regulatory PyrI chains organized as three dimers (R2).</text>
</comment>
<comment type="similarity">
    <text evidence="1">Belongs to the aspartate/ornithine carbamoyltransferase superfamily. ATCase family.</text>
</comment>
<feature type="chain" id="PRO_0000301553" description="Aspartate carbamoyltransferase catalytic subunit">
    <location>
        <begin position="1"/>
        <end position="319"/>
    </location>
</feature>
<feature type="binding site" evidence="1">
    <location>
        <position position="65"/>
    </location>
    <ligand>
        <name>carbamoyl phosphate</name>
        <dbReference type="ChEBI" id="CHEBI:58228"/>
    </ligand>
</feature>
<feature type="binding site" evidence="1">
    <location>
        <position position="66"/>
    </location>
    <ligand>
        <name>carbamoyl phosphate</name>
        <dbReference type="ChEBI" id="CHEBI:58228"/>
    </ligand>
</feature>
<feature type="binding site" evidence="1">
    <location>
        <position position="93"/>
    </location>
    <ligand>
        <name>L-aspartate</name>
        <dbReference type="ChEBI" id="CHEBI:29991"/>
    </ligand>
</feature>
<feature type="binding site" evidence="1">
    <location>
        <position position="115"/>
    </location>
    <ligand>
        <name>carbamoyl phosphate</name>
        <dbReference type="ChEBI" id="CHEBI:58228"/>
    </ligand>
</feature>
<feature type="binding site" evidence="1">
    <location>
        <position position="149"/>
    </location>
    <ligand>
        <name>carbamoyl phosphate</name>
        <dbReference type="ChEBI" id="CHEBI:58228"/>
    </ligand>
</feature>
<feature type="binding site" evidence="1">
    <location>
        <position position="152"/>
    </location>
    <ligand>
        <name>carbamoyl phosphate</name>
        <dbReference type="ChEBI" id="CHEBI:58228"/>
    </ligand>
</feature>
<feature type="binding site" evidence="1">
    <location>
        <position position="182"/>
    </location>
    <ligand>
        <name>L-aspartate</name>
        <dbReference type="ChEBI" id="CHEBI:29991"/>
    </ligand>
</feature>
<feature type="binding site" evidence="1">
    <location>
        <position position="237"/>
    </location>
    <ligand>
        <name>L-aspartate</name>
        <dbReference type="ChEBI" id="CHEBI:29991"/>
    </ligand>
</feature>
<feature type="binding site" evidence="1">
    <location>
        <position position="278"/>
    </location>
    <ligand>
        <name>carbamoyl phosphate</name>
        <dbReference type="ChEBI" id="CHEBI:58228"/>
    </ligand>
</feature>
<feature type="binding site" evidence="1">
    <location>
        <position position="279"/>
    </location>
    <ligand>
        <name>carbamoyl phosphate</name>
        <dbReference type="ChEBI" id="CHEBI:58228"/>
    </ligand>
</feature>
<evidence type="ECO:0000255" key="1">
    <source>
        <dbReference type="HAMAP-Rule" id="MF_00001"/>
    </source>
</evidence>
<organism>
    <name type="scientific">Azoarcus sp. (strain BH72)</name>
    <dbReference type="NCBI Taxonomy" id="418699"/>
    <lineage>
        <taxon>Bacteria</taxon>
        <taxon>Pseudomonadati</taxon>
        <taxon>Pseudomonadota</taxon>
        <taxon>Betaproteobacteria</taxon>
        <taxon>Rhodocyclales</taxon>
        <taxon>Zoogloeaceae</taxon>
        <taxon>Azoarcus</taxon>
    </lineage>
</organism>
<accession>A1KB72</accession>